<sequence>MLNSIHRSFHLTSRHQIVLRLCSPSASRTIMSSSPHSPIPKTHTASLDSLNDYEEQFPPLTGGSKTKKFYLGSTNPSTPCQSSQLQNWTSGKDALSLQRNLGCKNRRRRRASRFLHEESNGTTFEVGAGIGSPTSMVHFDSTNPSSSSKSSQSQNLKIRKVRNHRNSGFKSRDQSPQRIKDPPPFDICSSVLERNDTSIKDWILADETNRETVEVSNKHKVIRPGMVLLKDFLTPDIQVDIVKTCRELGVKPTGFYQPGYSVGSKLHLQMMCLGRNWDPQTKYRKNTDIDSKAPEIPVTFNVLVEKAIREAHALIDRESGTEDAERILPVMSPDICIVNFYSETGRLGLHQDRDESEESIARGLPIVSFSIGDSAEFLYGEKRDVEEAQGVILESGDVLIFGGESRMIFHGVKSIIPNSAPMSLLNESKLRTGRLNLTFRHF</sequence>
<comment type="function">
    <text evidence="4">Dioxygenase that catalyzes DNA N(6)-methyladenine (6 mA) demethylation to modulate gene expression and regulate seed germination (PubMed:38432357).</text>
</comment>
<comment type="catalytic activity">
    <reaction evidence="4">
        <text>an N(6)-methyl-2'-deoxyadenosine in DNA + 2-oxoglutarate + O2 = a 2'-deoxyadenosine in DNA + formaldehyde + succinate + CO2</text>
        <dbReference type="Rhea" id="RHEA:49524"/>
        <dbReference type="Rhea" id="RHEA-COMP:12418"/>
        <dbReference type="Rhea" id="RHEA-COMP:12419"/>
        <dbReference type="ChEBI" id="CHEBI:15379"/>
        <dbReference type="ChEBI" id="CHEBI:16526"/>
        <dbReference type="ChEBI" id="CHEBI:16810"/>
        <dbReference type="ChEBI" id="CHEBI:16842"/>
        <dbReference type="ChEBI" id="CHEBI:30031"/>
        <dbReference type="ChEBI" id="CHEBI:90615"/>
        <dbReference type="ChEBI" id="CHEBI:90616"/>
        <dbReference type="EC" id="1.14.11.51"/>
    </reaction>
    <physiologicalReaction direction="left-to-right" evidence="4">
        <dbReference type="Rhea" id="RHEA:49525"/>
    </physiologicalReaction>
</comment>
<comment type="cofactor">
    <cofactor evidence="2">
        <name>Fe(2+)</name>
        <dbReference type="ChEBI" id="CHEBI:29033"/>
    </cofactor>
    <text evidence="2">Binds 1 Fe(2+) ion per subunit.</text>
</comment>
<comment type="subcellular location">
    <subcellularLocation>
        <location evidence="4">Nucleus</location>
    </subcellularLocation>
    <subcellularLocation>
        <location evidence="4">Cytoplasm</location>
    </subcellularLocation>
</comment>
<comment type="alternative products">
    <event type="alternative splicing"/>
    <isoform>
        <id>F4KAV2-1</id>
        <name>1</name>
        <sequence type="displayed"/>
    </isoform>
    <isoform>
        <id>F4KAV2-2</id>
        <name>2</name>
        <sequence type="described" ref="VSP_062368"/>
    </isoform>
    <isoform>
        <id>F4KAV2-3</id>
        <name>3</name>
        <sequence type="described" ref="VSP_062369 VSP_062370 VSP_062371"/>
    </isoform>
</comment>
<comment type="tissue specificity">
    <text evidence="4">Expressed at low levels in roots, seedlings and rosette leaves, but barely in cauline leaves, stems, siliques and flowers.</text>
</comment>
<comment type="disruption phenotype">
    <text evidence="4">Elevated DNA N(6)-methyladenine (6 mA) methylation levels (PubMed:38432357). Plants lacking ALKBH1A and ALKBH1D show delayed seed germination associated with dysregulation of seed germination key regulators (e.g. FUS3, TPC1 and SPHK1) due to a high 6 mA DNA methylation state (PubMed:38432357).</text>
</comment>
<comment type="similarity">
    <text evidence="6">Belongs to the alkB family.</text>
</comment>
<comment type="sequence caution" evidence="6">
    <conflict type="erroneous gene model prediction">
        <sequence resource="EMBL-CDS" id="CAB82748"/>
    </conflict>
</comment>
<organism>
    <name type="scientific">Arabidopsis thaliana</name>
    <name type="common">Mouse-ear cress</name>
    <dbReference type="NCBI Taxonomy" id="3702"/>
    <lineage>
        <taxon>Eukaryota</taxon>
        <taxon>Viridiplantae</taxon>
        <taxon>Streptophyta</taxon>
        <taxon>Embryophyta</taxon>
        <taxon>Tracheophyta</taxon>
        <taxon>Spermatophyta</taxon>
        <taxon>Magnoliopsida</taxon>
        <taxon>eudicotyledons</taxon>
        <taxon>Gunneridae</taxon>
        <taxon>Pentapetalae</taxon>
        <taxon>rosids</taxon>
        <taxon>malvids</taxon>
        <taxon>Brassicales</taxon>
        <taxon>Brassicaceae</taxon>
        <taxon>Camelineae</taxon>
        <taxon>Arabidopsis</taxon>
    </lineage>
</organism>
<accession>F4KAV2</accession>
<accession>C0Z2F3</accession>
<accession>Q8GWJ2</accession>
<accession>Q9LZW8</accession>
<keyword id="KW-0025">Alternative splicing</keyword>
<keyword id="KW-0963">Cytoplasm</keyword>
<keyword id="KW-0223">Dioxygenase</keyword>
<keyword id="KW-0227">DNA damage</keyword>
<keyword id="KW-0234">DNA repair</keyword>
<keyword id="KW-0408">Iron</keyword>
<keyword id="KW-0479">Metal-binding</keyword>
<keyword id="KW-0539">Nucleus</keyword>
<keyword id="KW-0560">Oxidoreductase</keyword>
<keyword id="KW-1185">Reference proteome</keyword>
<gene>
    <name evidence="5" type="primary">ALKBH1D</name>
    <name evidence="10" type="ordered locus">At5g01780</name>
    <name evidence="11" type="ORF">T20L15.50</name>
</gene>
<proteinExistence type="evidence at protein level"/>
<protein>
    <recommendedName>
        <fullName evidence="5">DNA N(6)-methyladenine demethylase ALKBH1D</fullName>
        <shortName evidence="5">DNA 6 mA demethylase ALKBH1D</shortName>
        <ecNumber evidence="4">1.14.11.51</ecNumber>
    </recommendedName>
    <alternativeName>
        <fullName evidence="5">Alkylated DNA repair protein alkB homolog 1D</fullName>
        <shortName evidence="5">AtALKBH1D</shortName>
        <shortName evidence="9">Protein alkB homolog 1D</shortName>
    </alternativeName>
    <alternativeName>
        <fullName evidence="5">Alpha-ketoglutarate-dependent dioxygenase ALKBH1D</fullName>
    </alternativeName>
</protein>
<evidence type="ECO:0000250" key="1">
    <source>
        <dbReference type="UniProtKB" id="P05050"/>
    </source>
</evidence>
<evidence type="ECO:0000255" key="2">
    <source>
        <dbReference type="PROSITE-ProRule" id="PRU00805"/>
    </source>
</evidence>
<evidence type="ECO:0000256" key="3">
    <source>
        <dbReference type="SAM" id="MobiDB-lite"/>
    </source>
</evidence>
<evidence type="ECO:0000269" key="4">
    <source>
    </source>
</evidence>
<evidence type="ECO:0000303" key="5">
    <source>
    </source>
</evidence>
<evidence type="ECO:0000305" key="6"/>
<evidence type="ECO:0000305" key="7">
    <source>
    </source>
</evidence>
<evidence type="ECO:0000305" key="8">
    <source>
    </source>
</evidence>
<evidence type="ECO:0000305" key="9">
    <source>
    </source>
</evidence>
<evidence type="ECO:0000312" key="10">
    <source>
        <dbReference type="Araport" id="AT5G01780"/>
    </source>
</evidence>
<evidence type="ECO:0000312" key="11">
    <source>
        <dbReference type="EMBL" id="CAB82748.1"/>
    </source>
</evidence>
<feature type="chain" id="PRO_0000460627" description="DNA N(6)-methyladenine demethylase ALKBH1D">
    <location>
        <begin position="1"/>
        <end position="442"/>
    </location>
</feature>
<feature type="domain" description="Fe2OG dioxygenase" evidence="2">
    <location>
        <begin position="332"/>
        <end position="442"/>
    </location>
</feature>
<feature type="region of interest" description="Disordered" evidence="3">
    <location>
        <begin position="135"/>
        <end position="185"/>
    </location>
</feature>
<feature type="compositionally biased region" description="Polar residues" evidence="3">
    <location>
        <begin position="135"/>
        <end position="144"/>
    </location>
</feature>
<feature type="compositionally biased region" description="Low complexity" evidence="3">
    <location>
        <begin position="145"/>
        <end position="154"/>
    </location>
</feature>
<feature type="compositionally biased region" description="Basic residues" evidence="3">
    <location>
        <begin position="157"/>
        <end position="167"/>
    </location>
</feature>
<feature type="compositionally biased region" description="Basic and acidic residues" evidence="3">
    <location>
        <begin position="170"/>
        <end position="183"/>
    </location>
</feature>
<feature type="binding site" evidence="1">
    <location>
        <begin position="339"/>
        <end position="341"/>
    </location>
    <ligand>
        <name>2-oxoglutarate</name>
        <dbReference type="ChEBI" id="CHEBI:16810"/>
    </ligand>
</feature>
<feature type="binding site" evidence="2">
    <location>
        <position position="350"/>
    </location>
    <ligand>
        <name>Fe cation</name>
        <dbReference type="ChEBI" id="CHEBI:24875"/>
        <note>catalytic</note>
    </ligand>
</feature>
<feature type="binding site" evidence="2">
    <location>
        <position position="352"/>
    </location>
    <ligand>
        <name>Fe cation</name>
        <dbReference type="ChEBI" id="CHEBI:24875"/>
        <note>catalytic</note>
    </ligand>
</feature>
<feature type="binding site" evidence="2">
    <location>
        <position position="410"/>
    </location>
    <ligand>
        <name>Fe cation</name>
        <dbReference type="ChEBI" id="CHEBI:24875"/>
        <note>catalytic</note>
    </ligand>
</feature>
<feature type="binding site" evidence="1">
    <location>
        <begin position="434"/>
        <end position="440"/>
    </location>
    <ligand>
        <name>2-oxoglutarate</name>
        <dbReference type="ChEBI" id="CHEBI:16810"/>
    </ligand>
</feature>
<feature type="splice variant" id="VSP_062368" description="In isoform 2." evidence="8">
    <location>
        <begin position="1"/>
        <end position="225"/>
    </location>
</feature>
<feature type="splice variant" id="VSP_062369" description="In isoform 3." evidence="7">
    <location>
        <begin position="1"/>
        <end position="135"/>
    </location>
</feature>
<feature type="splice variant" id="VSP_062370" description="In isoform 3." evidence="7">
    <original>VDIVKTCRELGVKP</original>
    <variation>VKNCENDHIIHIFL</variation>
    <location>
        <begin position="239"/>
        <end position="252"/>
    </location>
</feature>
<feature type="splice variant" id="VSP_062371" description="In isoform 3." evidence="7">
    <location>
        <begin position="253"/>
        <end position="442"/>
    </location>
</feature>
<name>AKB1D_ARATH</name>
<reference key="1">
    <citation type="journal article" date="2000" name="Nature">
        <title>Sequence and analysis of chromosome 5 of the plant Arabidopsis thaliana.</title>
        <authorList>
            <person name="Tabata S."/>
            <person name="Kaneko T."/>
            <person name="Nakamura Y."/>
            <person name="Kotani H."/>
            <person name="Kato T."/>
            <person name="Asamizu E."/>
            <person name="Miyajima N."/>
            <person name="Sasamoto S."/>
            <person name="Kimura T."/>
            <person name="Hosouchi T."/>
            <person name="Kawashima K."/>
            <person name="Kohara M."/>
            <person name="Matsumoto M."/>
            <person name="Matsuno A."/>
            <person name="Muraki A."/>
            <person name="Nakayama S."/>
            <person name="Nakazaki N."/>
            <person name="Naruo K."/>
            <person name="Okumura S."/>
            <person name="Shinpo S."/>
            <person name="Takeuchi C."/>
            <person name="Wada T."/>
            <person name="Watanabe A."/>
            <person name="Yamada M."/>
            <person name="Yasuda M."/>
            <person name="Sato S."/>
            <person name="de la Bastide M."/>
            <person name="Huang E."/>
            <person name="Spiegel L."/>
            <person name="Gnoj L."/>
            <person name="O'Shaughnessy A."/>
            <person name="Preston R."/>
            <person name="Habermann K."/>
            <person name="Murray J."/>
            <person name="Johnson D."/>
            <person name="Rohlfing T."/>
            <person name="Nelson J."/>
            <person name="Stoneking T."/>
            <person name="Pepin K."/>
            <person name="Spieth J."/>
            <person name="Sekhon M."/>
            <person name="Armstrong J."/>
            <person name="Becker M."/>
            <person name="Belter E."/>
            <person name="Cordum H."/>
            <person name="Cordes M."/>
            <person name="Courtney L."/>
            <person name="Courtney W."/>
            <person name="Dante M."/>
            <person name="Du H."/>
            <person name="Edwards J."/>
            <person name="Fryman J."/>
            <person name="Haakensen B."/>
            <person name="Lamar E."/>
            <person name="Latreille P."/>
            <person name="Leonard S."/>
            <person name="Meyer R."/>
            <person name="Mulvaney E."/>
            <person name="Ozersky P."/>
            <person name="Riley A."/>
            <person name="Strowmatt C."/>
            <person name="Wagner-McPherson C."/>
            <person name="Wollam A."/>
            <person name="Yoakum M."/>
            <person name="Bell M."/>
            <person name="Dedhia N."/>
            <person name="Parnell L."/>
            <person name="Shah R."/>
            <person name="Rodriguez M."/>
            <person name="Hoon See L."/>
            <person name="Vil D."/>
            <person name="Baker J."/>
            <person name="Kirchoff K."/>
            <person name="Toth K."/>
            <person name="King L."/>
            <person name="Bahret A."/>
            <person name="Miller B."/>
            <person name="Marra M.A."/>
            <person name="Martienssen R."/>
            <person name="McCombie W.R."/>
            <person name="Wilson R.K."/>
            <person name="Murphy G."/>
            <person name="Bancroft I."/>
            <person name="Volckaert G."/>
            <person name="Wambutt R."/>
            <person name="Duesterhoeft A."/>
            <person name="Stiekema W."/>
            <person name="Pohl T."/>
            <person name="Entian K.-D."/>
            <person name="Terryn N."/>
            <person name="Hartley N."/>
            <person name="Bent E."/>
            <person name="Johnson S."/>
            <person name="Langham S.-A."/>
            <person name="McCullagh B."/>
            <person name="Robben J."/>
            <person name="Grymonprez B."/>
            <person name="Zimmermann W."/>
            <person name="Ramsperger U."/>
            <person name="Wedler H."/>
            <person name="Balke K."/>
            <person name="Wedler E."/>
            <person name="Peters S."/>
            <person name="van Staveren M."/>
            <person name="Dirkse W."/>
            <person name="Mooijman P."/>
            <person name="Klein Lankhorst R."/>
            <person name="Weitzenegger T."/>
            <person name="Bothe G."/>
            <person name="Rose M."/>
            <person name="Hauf J."/>
            <person name="Berneiser S."/>
            <person name="Hempel S."/>
            <person name="Feldpausch M."/>
            <person name="Lamberth S."/>
            <person name="Villarroel R."/>
            <person name="Gielen J."/>
            <person name="Ardiles W."/>
            <person name="Bents O."/>
            <person name="Lemcke K."/>
            <person name="Kolesov G."/>
            <person name="Mayer K.F.X."/>
            <person name="Rudd S."/>
            <person name="Schoof H."/>
            <person name="Schueller C."/>
            <person name="Zaccaria P."/>
            <person name="Mewes H.-W."/>
            <person name="Bevan M."/>
            <person name="Fransz P.F."/>
        </authorList>
    </citation>
    <scope>NUCLEOTIDE SEQUENCE [LARGE SCALE GENOMIC DNA]</scope>
    <source>
        <strain>cv. Columbia</strain>
    </source>
</reference>
<reference key="2">
    <citation type="journal article" date="2017" name="Plant J.">
        <title>Araport11: a complete reannotation of the Arabidopsis thaliana reference genome.</title>
        <authorList>
            <person name="Cheng C.Y."/>
            <person name="Krishnakumar V."/>
            <person name="Chan A.P."/>
            <person name="Thibaud-Nissen F."/>
            <person name="Schobel S."/>
            <person name="Town C.D."/>
        </authorList>
    </citation>
    <scope>GENOME REANNOTATION</scope>
    <source>
        <strain>cv. Columbia</strain>
    </source>
</reference>
<reference key="3">
    <citation type="journal article" date="2009" name="DNA Res.">
        <title>Analysis of multiple occurrences of alternative splicing events in Arabidopsis thaliana using novel sequenced full-length cDNAs.</title>
        <authorList>
            <person name="Iida K."/>
            <person name="Fukami-Kobayashi K."/>
            <person name="Toyoda A."/>
            <person name="Sakaki Y."/>
            <person name="Kobayashi M."/>
            <person name="Seki M."/>
            <person name="Shinozaki K."/>
        </authorList>
    </citation>
    <scope>NUCLEOTIDE SEQUENCE [LARGE SCALE MRNA] (ISOFORM 2)</scope>
    <source>
        <strain>cv. Columbia</strain>
        <tissue>Rosette leaf</tissue>
    </source>
</reference>
<reference key="4">
    <citation type="journal article" date="2002" name="Science">
        <title>Functional annotation of a full-length Arabidopsis cDNA collection.</title>
        <authorList>
            <person name="Seki M."/>
            <person name="Narusaka M."/>
            <person name="Kamiya A."/>
            <person name="Ishida J."/>
            <person name="Satou M."/>
            <person name="Sakurai T."/>
            <person name="Nakajima M."/>
            <person name="Enju A."/>
            <person name="Akiyama K."/>
            <person name="Oono Y."/>
            <person name="Muramatsu M."/>
            <person name="Hayashizaki Y."/>
            <person name="Kawai J."/>
            <person name="Carninci P."/>
            <person name="Itoh M."/>
            <person name="Ishii Y."/>
            <person name="Arakawa T."/>
            <person name="Shibata K."/>
            <person name="Shinagawa A."/>
            <person name="Shinozaki K."/>
        </authorList>
    </citation>
    <scope>NUCLEOTIDE SEQUENCE [LARGE SCALE MRNA] (ISOFORM 3)</scope>
    <source>
        <strain>cv. Columbia</strain>
    </source>
</reference>
<reference key="5">
    <citation type="journal article" date="2024" name="Plant Sci.">
        <title>Identification of AtALKBH1A and AtALKBH1D as DNA N6-adenine demethylases in Arabidopsis thaliana.</title>
        <authorList>
            <person name="Li D."/>
            <person name="Du J."/>
            <person name="Gao M."/>
            <person name="He C."/>
        </authorList>
    </citation>
    <scope>FUNCTION</scope>
    <scope>DISRUPTION PHENOTYPE</scope>
    <scope>CATALYTIC ACTIVITY</scope>
    <scope>TISSUE SPECIFICITY</scope>
    <scope>SUBCELLULAR LOCATION</scope>
    <scope>GENE FAMILY</scope>
    <scope>NOMENCLATURE</scope>
    <source>
        <strain>cv. Columbia</strain>
    </source>
</reference>
<dbReference type="EC" id="1.14.11.51" evidence="4"/>
<dbReference type="EMBL" id="AL162351">
    <property type="protein sequence ID" value="CAB82748.1"/>
    <property type="status" value="ALT_SEQ"/>
    <property type="molecule type" value="Genomic_DNA"/>
</dbReference>
<dbReference type="EMBL" id="CP002688">
    <property type="protein sequence ID" value="AED90391.1"/>
    <property type="molecule type" value="Genomic_DNA"/>
</dbReference>
<dbReference type="EMBL" id="AK318767">
    <property type="protein sequence ID" value="BAH56882.1"/>
    <property type="molecule type" value="mRNA"/>
</dbReference>
<dbReference type="EMBL" id="AK118808">
    <property type="protein sequence ID" value="BAC43398.1"/>
    <property type="molecule type" value="mRNA"/>
</dbReference>
<dbReference type="PIR" id="T48199">
    <property type="entry name" value="T48199"/>
</dbReference>
<dbReference type="RefSeq" id="NP_001190202.1">
    <molecule id="F4KAV2-1"/>
    <property type="nucleotide sequence ID" value="NM_001203273.2"/>
</dbReference>
<dbReference type="SMR" id="F4KAV2"/>
<dbReference type="FunCoup" id="F4KAV2">
    <property type="interactions" value="14"/>
</dbReference>
<dbReference type="STRING" id="3702.F4KAV2"/>
<dbReference type="SwissPalm" id="F4KAV2"/>
<dbReference type="PaxDb" id="3702-AT5G01780.2"/>
<dbReference type="ProteomicsDB" id="198034"/>
<dbReference type="EnsemblPlants" id="AT5G01780.2">
    <molecule id="F4KAV2-1"/>
    <property type="protein sequence ID" value="AT5G01780.2"/>
    <property type="gene ID" value="AT5G01780"/>
</dbReference>
<dbReference type="GeneID" id="831672"/>
<dbReference type="Gramene" id="AT5G01780.2">
    <molecule id="F4KAV2-1"/>
    <property type="protein sequence ID" value="AT5G01780.2"/>
    <property type="gene ID" value="AT5G01780"/>
</dbReference>
<dbReference type="KEGG" id="ath:AT5G01780"/>
<dbReference type="Araport" id="AT5G01780"/>
<dbReference type="TAIR" id="AT5G01780"/>
<dbReference type="eggNOG" id="KOG2731">
    <property type="taxonomic scope" value="Eukaryota"/>
</dbReference>
<dbReference type="InParanoid" id="F4KAV2"/>
<dbReference type="Proteomes" id="UP000006548">
    <property type="component" value="Chromosome 5"/>
</dbReference>
<dbReference type="ExpressionAtlas" id="F4KAV2">
    <property type="expression patterns" value="baseline and differential"/>
</dbReference>
<dbReference type="GO" id="GO:0005737">
    <property type="term" value="C:cytoplasm"/>
    <property type="evidence" value="ECO:0000314"/>
    <property type="project" value="UniProtKB"/>
</dbReference>
<dbReference type="GO" id="GO:0005634">
    <property type="term" value="C:nucleus"/>
    <property type="evidence" value="ECO:0000314"/>
    <property type="project" value="UniProtKB"/>
</dbReference>
<dbReference type="GO" id="GO:0141131">
    <property type="term" value="F:DNA N6-methyladenine demethylase activity"/>
    <property type="evidence" value="ECO:0000314"/>
    <property type="project" value="UniProtKB"/>
</dbReference>
<dbReference type="GO" id="GO:0046872">
    <property type="term" value="F:metal ion binding"/>
    <property type="evidence" value="ECO:0007669"/>
    <property type="project" value="UniProtKB-KW"/>
</dbReference>
<dbReference type="GO" id="GO:0006281">
    <property type="term" value="P:DNA repair"/>
    <property type="evidence" value="ECO:0007669"/>
    <property type="project" value="UniProtKB-KW"/>
</dbReference>
<dbReference type="GO" id="GO:0010029">
    <property type="term" value="P:regulation of seed germination"/>
    <property type="evidence" value="ECO:0000315"/>
    <property type="project" value="UniProtKB"/>
</dbReference>
<dbReference type="FunFam" id="2.60.120.590:FF:000013">
    <property type="entry name" value="2-oxoglutarate-dependent dioxygenase family protein"/>
    <property type="match status" value="1"/>
</dbReference>
<dbReference type="Gene3D" id="2.60.120.590">
    <property type="entry name" value="Alpha-ketoglutarate-dependent dioxygenase AlkB-like"/>
    <property type="match status" value="1"/>
</dbReference>
<dbReference type="InterPro" id="IPR004574">
    <property type="entry name" value="Alkb"/>
</dbReference>
<dbReference type="InterPro" id="IPR027450">
    <property type="entry name" value="AlkB-like"/>
</dbReference>
<dbReference type="InterPro" id="IPR037151">
    <property type="entry name" value="AlkB-like_sf"/>
</dbReference>
<dbReference type="InterPro" id="IPR005123">
    <property type="entry name" value="Oxoglu/Fe-dep_dioxygenase_dom"/>
</dbReference>
<dbReference type="PANTHER" id="PTHR16557:SF10">
    <property type="entry name" value="2-OXOGLUTARATE-DEPENDENT DIOXYGENASE FAMILY PROTEIN"/>
    <property type="match status" value="1"/>
</dbReference>
<dbReference type="PANTHER" id="PTHR16557">
    <property type="entry name" value="ALKYLATED DNA REPAIR PROTEIN ALKB-RELATED"/>
    <property type="match status" value="1"/>
</dbReference>
<dbReference type="Pfam" id="PF13532">
    <property type="entry name" value="2OG-FeII_Oxy_2"/>
    <property type="match status" value="1"/>
</dbReference>
<dbReference type="SUPFAM" id="SSF51197">
    <property type="entry name" value="Clavaminate synthase-like"/>
    <property type="match status" value="1"/>
</dbReference>
<dbReference type="PROSITE" id="PS51471">
    <property type="entry name" value="FE2OG_OXY"/>
    <property type="match status" value="1"/>
</dbReference>